<sequence>MSHNHEQEHDLITLVDEQGNETLFEVLLTIDGKEEFGKNYVLLVPAGAEEDADGQIEIQAYSFTENEDGTEGALQPIPEDADAEWIMIEEVFNSFLDED</sequence>
<dbReference type="EMBL" id="AE014133">
    <property type="protein sequence ID" value="AAN59673.1"/>
    <property type="molecule type" value="Genomic_DNA"/>
</dbReference>
<dbReference type="RefSeq" id="NP_722367.1">
    <property type="nucleotide sequence ID" value="NC_004350.2"/>
</dbReference>
<dbReference type="RefSeq" id="WP_002262384.1">
    <property type="nucleotide sequence ID" value="NC_004350.2"/>
</dbReference>
<dbReference type="STRING" id="210007.SMU_2077c"/>
<dbReference type="KEGG" id="smu:SMU_2077c"/>
<dbReference type="PATRIC" id="fig|210007.7.peg.1849"/>
<dbReference type="eggNOG" id="COG3906">
    <property type="taxonomic scope" value="Bacteria"/>
</dbReference>
<dbReference type="HOGENOM" id="CLU_146610_2_1_9"/>
<dbReference type="OrthoDB" id="2086132at2"/>
<dbReference type="PhylomeDB" id="Q8DRX9"/>
<dbReference type="Proteomes" id="UP000002512">
    <property type="component" value="Chromosome"/>
</dbReference>
<dbReference type="HAMAP" id="MF_01448">
    <property type="entry name" value="UPF0473"/>
    <property type="match status" value="1"/>
</dbReference>
<dbReference type="InterPro" id="IPR009711">
    <property type="entry name" value="UPF0473"/>
</dbReference>
<dbReference type="NCBIfam" id="NF010215">
    <property type="entry name" value="PRK13678.1-2"/>
    <property type="match status" value="1"/>
</dbReference>
<dbReference type="NCBIfam" id="NF010217">
    <property type="entry name" value="PRK13678.1-4"/>
    <property type="match status" value="1"/>
</dbReference>
<dbReference type="PANTHER" id="PTHR40066">
    <property type="entry name" value="UPF0473 PROTEIN CBO2561/CLC_2432"/>
    <property type="match status" value="1"/>
</dbReference>
<dbReference type="PANTHER" id="PTHR40066:SF1">
    <property type="entry name" value="UPF0473 PROTEIN CBO2561_CLC_2432"/>
    <property type="match status" value="1"/>
</dbReference>
<dbReference type="Pfam" id="PF06949">
    <property type="entry name" value="DUF1292"/>
    <property type="match status" value="1"/>
</dbReference>
<proteinExistence type="inferred from homology"/>
<reference key="1">
    <citation type="journal article" date="2002" name="Proc. Natl. Acad. Sci. U.S.A.">
        <title>Genome sequence of Streptococcus mutans UA159, a cariogenic dental pathogen.</title>
        <authorList>
            <person name="Ajdic D.J."/>
            <person name="McShan W.M."/>
            <person name="McLaughlin R.E."/>
            <person name="Savic G."/>
            <person name="Chang J."/>
            <person name="Carson M.B."/>
            <person name="Primeaux C."/>
            <person name="Tian R."/>
            <person name="Kenton S."/>
            <person name="Jia H.G."/>
            <person name="Lin S.P."/>
            <person name="Qian Y."/>
            <person name="Li S."/>
            <person name="Zhu H."/>
            <person name="Najar F.Z."/>
            <person name="Lai H."/>
            <person name="White J."/>
            <person name="Roe B.A."/>
            <person name="Ferretti J.J."/>
        </authorList>
    </citation>
    <scope>NUCLEOTIDE SEQUENCE [LARGE SCALE GENOMIC DNA]</scope>
    <source>
        <strain>ATCC 700610 / UA159</strain>
    </source>
</reference>
<feature type="chain" id="PRO_0000304856" description="UPF0473 protein SMU_2077c">
    <location>
        <begin position="1"/>
        <end position="99"/>
    </location>
</feature>
<protein>
    <recommendedName>
        <fullName evidence="1">UPF0473 protein SMU_2077c</fullName>
    </recommendedName>
</protein>
<name>Y2077_STRMU</name>
<keyword id="KW-1185">Reference proteome</keyword>
<gene>
    <name type="ordered locus">SMU_2077c</name>
</gene>
<comment type="similarity">
    <text evidence="1">Belongs to the UPF0473 family.</text>
</comment>
<evidence type="ECO:0000255" key="1">
    <source>
        <dbReference type="HAMAP-Rule" id="MF_01448"/>
    </source>
</evidence>
<organism>
    <name type="scientific">Streptococcus mutans serotype c (strain ATCC 700610 / UA159)</name>
    <dbReference type="NCBI Taxonomy" id="210007"/>
    <lineage>
        <taxon>Bacteria</taxon>
        <taxon>Bacillati</taxon>
        <taxon>Bacillota</taxon>
        <taxon>Bacilli</taxon>
        <taxon>Lactobacillales</taxon>
        <taxon>Streptococcaceae</taxon>
        <taxon>Streptococcus</taxon>
    </lineage>
</organism>
<accession>Q8DRX9</accession>